<dbReference type="EMBL" id="AP008231">
    <property type="protein sequence ID" value="BAD79082.1"/>
    <property type="molecule type" value="Genomic_DNA"/>
</dbReference>
<dbReference type="RefSeq" id="WP_011243204.1">
    <property type="nucleotide sequence ID" value="NC_006576.1"/>
</dbReference>
<dbReference type="SMR" id="Q5N3N8"/>
<dbReference type="KEGG" id="syc:syc0892_d"/>
<dbReference type="eggNOG" id="COG0081">
    <property type="taxonomic scope" value="Bacteria"/>
</dbReference>
<dbReference type="Proteomes" id="UP000001175">
    <property type="component" value="Chromosome"/>
</dbReference>
<dbReference type="GO" id="GO:0015934">
    <property type="term" value="C:large ribosomal subunit"/>
    <property type="evidence" value="ECO:0007669"/>
    <property type="project" value="InterPro"/>
</dbReference>
<dbReference type="GO" id="GO:0019843">
    <property type="term" value="F:rRNA binding"/>
    <property type="evidence" value="ECO:0007669"/>
    <property type="project" value="UniProtKB-UniRule"/>
</dbReference>
<dbReference type="GO" id="GO:0003735">
    <property type="term" value="F:structural constituent of ribosome"/>
    <property type="evidence" value="ECO:0007669"/>
    <property type="project" value="InterPro"/>
</dbReference>
<dbReference type="GO" id="GO:0000049">
    <property type="term" value="F:tRNA binding"/>
    <property type="evidence" value="ECO:0007669"/>
    <property type="project" value="UniProtKB-KW"/>
</dbReference>
<dbReference type="GO" id="GO:0006417">
    <property type="term" value="P:regulation of translation"/>
    <property type="evidence" value="ECO:0007669"/>
    <property type="project" value="UniProtKB-KW"/>
</dbReference>
<dbReference type="GO" id="GO:0006412">
    <property type="term" value="P:translation"/>
    <property type="evidence" value="ECO:0007669"/>
    <property type="project" value="UniProtKB-UniRule"/>
</dbReference>
<dbReference type="CDD" id="cd00403">
    <property type="entry name" value="Ribosomal_L1"/>
    <property type="match status" value="1"/>
</dbReference>
<dbReference type="FunFam" id="3.40.50.790:FF:000001">
    <property type="entry name" value="50S ribosomal protein L1"/>
    <property type="match status" value="1"/>
</dbReference>
<dbReference type="Gene3D" id="3.30.190.20">
    <property type="match status" value="1"/>
</dbReference>
<dbReference type="Gene3D" id="3.40.50.790">
    <property type="match status" value="1"/>
</dbReference>
<dbReference type="HAMAP" id="MF_01318_B">
    <property type="entry name" value="Ribosomal_uL1_B"/>
    <property type="match status" value="1"/>
</dbReference>
<dbReference type="InterPro" id="IPR005878">
    <property type="entry name" value="Ribosom_uL1_bac-type"/>
</dbReference>
<dbReference type="InterPro" id="IPR002143">
    <property type="entry name" value="Ribosomal_uL1"/>
</dbReference>
<dbReference type="InterPro" id="IPR023674">
    <property type="entry name" value="Ribosomal_uL1-like"/>
</dbReference>
<dbReference type="InterPro" id="IPR028364">
    <property type="entry name" value="Ribosomal_uL1/biogenesis"/>
</dbReference>
<dbReference type="InterPro" id="IPR016095">
    <property type="entry name" value="Ribosomal_uL1_3-a/b-sand"/>
</dbReference>
<dbReference type="InterPro" id="IPR023673">
    <property type="entry name" value="Ribosomal_uL1_CS"/>
</dbReference>
<dbReference type="NCBIfam" id="TIGR01169">
    <property type="entry name" value="rplA_bact"/>
    <property type="match status" value="1"/>
</dbReference>
<dbReference type="PANTHER" id="PTHR36427">
    <property type="entry name" value="54S RIBOSOMAL PROTEIN L1, MITOCHONDRIAL"/>
    <property type="match status" value="1"/>
</dbReference>
<dbReference type="PANTHER" id="PTHR36427:SF3">
    <property type="entry name" value="LARGE RIBOSOMAL SUBUNIT PROTEIN UL1M"/>
    <property type="match status" value="1"/>
</dbReference>
<dbReference type="Pfam" id="PF00687">
    <property type="entry name" value="Ribosomal_L1"/>
    <property type="match status" value="1"/>
</dbReference>
<dbReference type="PIRSF" id="PIRSF002155">
    <property type="entry name" value="Ribosomal_L1"/>
    <property type="match status" value="1"/>
</dbReference>
<dbReference type="SUPFAM" id="SSF56808">
    <property type="entry name" value="Ribosomal protein L1"/>
    <property type="match status" value="1"/>
</dbReference>
<dbReference type="PROSITE" id="PS01199">
    <property type="entry name" value="RIBOSOMAL_L1"/>
    <property type="match status" value="1"/>
</dbReference>
<keyword id="KW-0678">Repressor</keyword>
<keyword id="KW-0687">Ribonucleoprotein</keyword>
<keyword id="KW-0689">Ribosomal protein</keyword>
<keyword id="KW-0694">RNA-binding</keyword>
<keyword id="KW-0699">rRNA-binding</keyword>
<keyword id="KW-0810">Translation regulation</keyword>
<keyword id="KW-0820">tRNA-binding</keyword>
<comment type="function">
    <text evidence="1">Binds directly to 23S rRNA. The L1 stalk is quite mobile in the ribosome, and is involved in E site tRNA release.</text>
</comment>
<comment type="function">
    <text evidence="1">Protein L1 is also a translational repressor protein, it controls the translation of the L11 operon by binding to its mRNA.</text>
</comment>
<comment type="subunit">
    <text evidence="1">Part of the 50S ribosomal subunit.</text>
</comment>
<comment type="similarity">
    <text evidence="1">Belongs to the universal ribosomal protein uL1 family.</text>
</comment>
<proteinExistence type="inferred from homology"/>
<evidence type="ECO:0000255" key="1">
    <source>
        <dbReference type="HAMAP-Rule" id="MF_01318"/>
    </source>
</evidence>
<evidence type="ECO:0000305" key="2"/>
<reference key="1">
    <citation type="journal article" date="2007" name="Photosyn. Res.">
        <title>Complete nucleotide sequence of the freshwater unicellular cyanobacterium Synechococcus elongatus PCC 6301 chromosome: gene content and organization.</title>
        <authorList>
            <person name="Sugita C."/>
            <person name="Ogata K."/>
            <person name="Shikata M."/>
            <person name="Jikuya H."/>
            <person name="Takano J."/>
            <person name="Furumichi M."/>
            <person name="Kanehisa M."/>
            <person name="Omata T."/>
            <person name="Sugiura M."/>
            <person name="Sugita M."/>
        </authorList>
    </citation>
    <scope>NUCLEOTIDE SEQUENCE [LARGE SCALE GENOMIC DNA]</scope>
    <source>
        <strain>ATCC 27144 / PCC 6301 / SAUG 1402/1</strain>
    </source>
</reference>
<gene>
    <name evidence="1" type="primary">rplA</name>
    <name evidence="1" type="synonym">rpl1</name>
    <name type="ordered locus">syc0892_d</name>
</gene>
<accession>Q5N3N8</accession>
<protein>
    <recommendedName>
        <fullName evidence="1">Large ribosomal subunit protein uL1</fullName>
    </recommendedName>
    <alternativeName>
        <fullName evidence="2">50S ribosomal protein L1</fullName>
    </alternativeName>
</protein>
<name>RL1_SYNP6</name>
<organism>
    <name type="scientific">Synechococcus sp. (strain ATCC 27144 / PCC 6301 / SAUG 1402/1)</name>
    <name type="common">Anacystis nidulans</name>
    <dbReference type="NCBI Taxonomy" id="269084"/>
    <lineage>
        <taxon>Bacteria</taxon>
        <taxon>Bacillati</taxon>
        <taxon>Cyanobacteriota</taxon>
        <taxon>Cyanophyceae</taxon>
        <taxon>Synechococcales</taxon>
        <taxon>Synechococcaceae</taxon>
        <taxon>Synechococcus</taxon>
    </lineage>
</organism>
<sequence>MTRKVSRRLQELQKKVEDRAYEPLAALNLLKETATAKFPESAEAHIRLGIDPKYTDQQLRTTVALPKGTGQTIRVAVIARGEKVAEAKAAGADIAGSEELIEEISKGFLDFDLLIATPDVMPQVAKLGRQLGPRGLMPSPKGGTVTFDLEQAVNEFKAGKLEFRADRTGIVHVLFGKASFSADDLLANLKALQETIDRNRPSGAKGRYWRSVYISATMGPAIEVDINALRDPKLAEA</sequence>
<feature type="chain" id="PRO_0000125759" description="Large ribosomal subunit protein uL1">
    <location>
        <begin position="1"/>
        <end position="237"/>
    </location>
</feature>